<dbReference type="EMBL" id="AM746676">
    <property type="protein sequence ID" value="CAN98123.1"/>
    <property type="molecule type" value="Genomic_DNA"/>
</dbReference>
<dbReference type="RefSeq" id="WP_012240562.1">
    <property type="nucleotide sequence ID" value="NC_010162.1"/>
</dbReference>
<dbReference type="SMR" id="A9FGI0"/>
<dbReference type="STRING" id="448385.sce7953"/>
<dbReference type="KEGG" id="scl:sce7953"/>
<dbReference type="eggNOG" id="COG0093">
    <property type="taxonomic scope" value="Bacteria"/>
</dbReference>
<dbReference type="HOGENOM" id="CLU_095071_2_1_7"/>
<dbReference type="OrthoDB" id="9806379at2"/>
<dbReference type="BioCyc" id="SCEL448385:SCE_RS40705-MONOMER"/>
<dbReference type="Proteomes" id="UP000002139">
    <property type="component" value="Chromosome"/>
</dbReference>
<dbReference type="GO" id="GO:0022625">
    <property type="term" value="C:cytosolic large ribosomal subunit"/>
    <property type="evidence" value="ECO:0007669"/>
    <property type="project" value="TreeGrafter"/>
</dbReference>
<dbReference type="GO" id="GO:0070180">
    <property type="term" value="F:large ribosomal subunit rRNA binding"/>
    <property type="evidence" value="ECO:0007669"/>
    <property type="project" value="TreeGrafter"/>
</dbReference>
<dbReference type="GO" id="GO:0003735">
    <property type="term" value="F:structural constituent of ribosome"/>
    <property type="evidence" value="ECO:0007669"/>
    <property type="project" value="InterPro"/>
</dbReference>
<dbReference type="GO" id="GO:0006412">
    <property type="term" value="P:translation"/>
    <property type="evidence" value="ECO:0007669"/>
    <property type="project" value="UniProtKB-UniRule"/>
</dbReference>
<dbReference type="CDD" id="cd00337">
    <property type="entry name" value="Ribosomal_uL14"/>
    <property type="match status" value="1"/>
</dbReference>
<dbReference type="FunFam" id="2.40.150.20:FF:000001">
    <property type="entry name" value="50S ribosomal protein L14"/>
    <property type="match status" value="1"/>
</dbReference>
<dbReference type="Gene3D" id="2.40.150.20">
    <property type="entry name" value="Ribosomal protein L14"/>
    <property type="match status" value="1"/>
</dbReference>
<dbReference type="HAMAP" id="MF_01367">
    <property type="entry name" value="Ribosomal_uL14"/>
    <property type="match status" value="1"/>
</dbReference>
<dbReference type="InterPro" id="IPR000218">
    <property type="entry name" value="Ribosomal_uL14"/>
</dbReference>
<dbReference type="InterPro" id="IPR005745">
    <property type="entry name" value="Ribosomal_uL14_bac-type"/>
</dbReference>
<dbReference type="InterPro" id="IPR019972">
    <property type="entry name" value="Ribosomal_uL14_CS"/>
</dbReference>
<dbReference type="InterPro" id="IPR036853">
    <property type="entry name" value="Ribosomal_uL14_sf"/>
</dbReference>
<dbReference type="NCBIfam" id="TIGR01067">
    <property type="entry name" value="rplN_bact"/>
    <property type="match status" value="1"/>
</dbReference>
<dbReference type="PANTHER" id="PTHR11761">
    <property type="entry name" value="50S/60S RIBOSOMAL PROTEIN L14/L23"/>
    <property type="match status" value="1"/>
</dbReference>
<dbReference type="PANTHER" id="PTHR11761:SF3">
    <property type="entry name" value="LARGE RIBOSOMAL SUBUNIT PROTEIN UL14M"/>
    <property type="match status" value="1"/>
</dbReference>
<dbReference type="Pfam" id="PF00238">
    <property type="entry name" value="Ribosomal_L14"/>
    <property type="match status" value="1"/>
</dbReference>
<dbReference type="SMART" id="SM01374">
    <property type="entry name" value="Ribosomal_L14"/>
    <property type="match status" value="1"/>
</dbReference>
<dbReference type="SUPFAM" id="SSF50193">
    <property type="entry name" value="Ribosomal protein L14"/>
    <property type="match status" value="1"/>
</dbReference>
<dbReference type="PROSITE" id="PS00049">
    <property type="entry name" value="RIBOSOMAL_L14"/>
    <property type="match status" value="1"/>
</dbReference>
<gene>
    <name evidence="1" type="primary">rplN</name>
    <name type="ordered locus">sce7953</name>
</gene>
<accession>A9FGI0</accession>
<keyword id="KW-1185">Reference proteome</keyword>
<keyword id="KW-0687">Ribonucleoprotein</keyword>
<keyword id="KW-0689">Ribosomal protein</keyword>
<keyword id="KW-0694">RNA-binding</keyword>
<keyword id="KW-0699">rRNA-binding</keyword>
<comment type="function">
    <text evidence="1">Binds to 23S rRNA. Forms part of two intersubunit bridges in the 70S ribosome.</text>
</comment>
<comment type="subunit">
    <text evidence="1">Part of the 50S ribosomal subunit. Forms a cluster with proteins L3 and L19. In the 70S ribosome, L14 and L19 interact and together make contacts with the 16S rRNA in bridges B5 and B8.</text>
</comment>
<comment type="similarity">
    <text evidence="1">Belongs to the universal ribosomal protein uL14 family.</text>
</comment>
<name>RL14_SORC5</name>
<organism>
    <name type="scientific">Sorangium cellulosum (strain So ce56)</name>
    <name type="common">Polyangium cellulosum (strain So ce56)</name>
    <dbReference type="NCBI Taxonomy" id="448385"/>
    <lineage>
        <taxon>Bacteria</taxon>
        <taxon>Pseudomonadati</taxon>
        <taxon>Myxococcota</taxon>
        <taxon>Polyangia</taxon>
        <taxon>Polyangiales</taxon>
        <taxon>Polyangiaceae</taxon>
        <taxon>Sorangium</taxon>
    </lineage>
</organism>
<feature type="chain" id="PRO_1000087150" description="Large ribosomal subunit protein uL14">
    <location>
        <begin position="1"/>
        <end position="122"/>
    </location>
</feature>
<sequence length="122" mass="13324">MIQVSTHLEVADNSGARIVKCIKVLGGSRRKYAALGDVIVVSIKEALPGTKVKKGETARAVVVRTAREYQRSDGSYIKFDGNSAVLINKEKEPIGTRIFGPVARELRAKKFMKIISLAPEVL</sequence>
<proteinExistence type="inferred from homology"/>
<evidence type="ECO:0000255" key="1">
    <source>
        <dbReference type="HAMAP-Rule" id="MF_01367"/>
    </source>
</evidence>
<evidence type="ECO:0000305" key="2"/>
<protein>
    <recommendedName>
        <fullName evidence="1">Large ribosomal subunit protein uL14</fullName>
    </recommendedName>
    <alternativeName>
        <fullName evidence="2">50S ribosomal protein L14</fullName>
    </alternativeName>
</protein>
<reference key="1">
    <citation type="journal article" date="2007" name="Nat. Biotechnol.">
        <title>Complete genome sequence of the myxobacterium Sorangium cellulosum.</title>
        <authorList>
            <person name="Schneiker S."/>
            <person name="Perlova O."/>
            <person name="Kaiser O."/>
            <person name="Gerth K."/>
            <person name="Alici A."/>
            <person name="Altmeyer M.O."/>
            <person name="Bartels D."/>
            <person name="Bekel T."/>
            <person name="Beyer S."/>
            <person name="Bode E."/>
            <person name="Bode H.B."/>
            <person name="Bolten C.J."/>
            <person name="Choudhuri J.V."/>
            <person name="Doss S."/>
            <person name="Elnakady Y.A."/>
            <person name="Frank B."/>
            <person name="Gaigalat L."/>
            <person name="Goesmann A."/>
            <person name="Groeger C."/>
            <person name="Gross F."/>
            <person name="Jelsbak L."/>
            <person name="Jelsbak L."/>
            <person name="Kalinowski J."/>
            <person name="Kegler C."/>
            <person name="Knauber T."/>
            <person name="Konietzny S."/>
            <person name="Kopp M."/>
            <person name="Krause L."/>
            <person name="Krug D."/>
            <person name="Linke B."/>
            <person name="Mahmud T."/>
            <person name="Martinez-Arias R."/>
            <person name="McHardy A.C."/>
            <person name="Merai M."/>
            <person name="Meyer F."/>
            <person name="Mormann S."/>
            <person name="Munoz-Dorado J."/>
            <person name="Perez J."/>
            <person name="Pradella S."/>
            <person name="Rachid S."/>
            <person name="Raddatz G."/>
            <person name="Rosenau F."/>
            <person name="Rueckert C."/>
            <person name="Sasse F."/>
            <person name="Scharfe M."/>
            <person name="Schuster S.C."/>
            <person name="Suen G."/>
            <person name="Treuner-Lange A."/>
            <person name="Velicer G.J."/>
            <person name="Vorholter F.-J."/>
            <person name="Weissman K.J."/>
            <person name="Welch R.D."/>
            <person name="Wenzel S.C."/>
            <person name="Whitworth D.E."/>
            <person name="Wilhelm S."/>
            <person name="Wittmann C."/>
            <person name="Bloecker H."/>
            <person name="Puehler A."/>
            <person name="Mueller R."/>
        </authorList>
    </citation>
    <scope>NUCLEOTIDE SEQUENCE [LARGE SCALE GENOMIC DNA]</scope>
    <source>
        <strain>So ce56</strain>
    </source>
</reference>